<reference key="1">
    <citation type="submission" date="2005-08" db="EMBL/GenBank/DDBJ databases">
        <title>Complete sequence of Chlorobium chlorochromatii CaD3.</title>
        <authorList>
            <consortium name="US DOE Joint Genome Institute"/>
            <person name="Copeland A."/>
            <person name="Lucas S."/>
            <person name="Lapidus A."/>
            <person name="Barry K."/>
            <person name="Detter J.C."/>
            <person name="Glavina T."/>
            <person name="Hammon N."/>
            <person name="Israni S."/>
            <person name="Pitluck S."/>
            <person name="Bryant D."/>
            <person name="Schmutz J."/>
            <person name="Larimer F."/>
            <person name="Land M."/>
            <person name="Kyrpides N."/>
            <person name="Ivanova N."/>
            <person name="Richardson P."/>
        </authorList>
    </citation>
    <scope>NUCLEOTIDE SEQUENCE [LARGE SCALE GENOMIC DNA]</scope>
    <source>
        <strain>CaD3</strain>
    </source>
</reference>
<evidence type="ECO:0000255" key="1">
    <source>
        <dbReference type="HAMAP-Rule" id="MF_00494"/>
    </source>
</evidence>
<protein>
    <recommendedName>
        <fullName evidence="1">Probable transaldolase</fullName>
        <ecNumber evidence="1">2.2.1.2</ecNumber>
    </recommendedName>
</protein>
<proteinExistence type="inferred from homology"/>
<keyword id="KW-0963">Cytoplasm</keyword>
<keyword id="KW-0570">Pentose shunt</keyword>
<keyword id="KW-0704">Schiff base</keyword>
<keyword id="KW-0808">Transferase</keyword>
<name>TAL_CHLCH</name>
<accession>Q3ANX8</accession>
<sequence length="222" mass="23884">MQFFIDTANLDEIRAAAELGVLDGVTTNPSLIAKVAGSSKPFTWQAFKDHIAAICEIVDGPVSAEVTALDANGMIDQGEELADIDGKVVIKCPVTLEGLKAISYFDENDIMTNATLVFSPNQALLAAKAGATYVSPFVGRLDDVSTNGMELIRQIVTIYRNYDFITEVIVASVRHSQHVVEAAMIGADIATIPFNVIKQLISHPLTEAGLKKFTEDAAIIQM</sequence>
<gene>
    <name evidence="1" type="primary">tal</name>
    <name type="ordered locus">Cag_0074</name>
</gene>
<dbReference type="EC" id="2.2.1.2" evidence="1"/>
<dbReference type="EMBL" id="CP000108">
    <property type="protein sequence ID" value="ABB27353.1"/>
    <property type="molecule type" value="Genomic_DNA"/>
</dbReference>
<dbReference type="SMR" id="Q3ANX8"/>
<dbReference type="STRING" id="340177.Cag_0074"/>
<dbReference type="KEGG" id="cch:Cag_0074"/>
<dbReference type="eggNOG" id="COG0176">
    <property type="taxonomic scope" value="Bacteria"/>
</dbReference>
<dbReference type="HOGENOM" id="CLU_079764_0_0_10"/>
<dbReference type="OrthoDB" id="9807051at2"/>
<dbReference type="UniPathway" id="UPA00115">
    <property type="reaction ID" value="UER00414"/>
</dbReference>
<dbReference type="GO" id="GO:0005737">
    <property type="term" value="C:cytoplasm"/>
    <property type="evidence" value="ECO:0007669"/>
    <property type="project" value="UniProtKB-SubCell"/>
</dbReference>
<dbReference type="GO" id="GO:0016832">
    <property type="term" value="F:aldehyde-lyase activity"/>
    <property type="evidence" value="ECO:0007669"/>
    <property type="project" value="InterPro"/>
</dbReference>
<dbReference type="GO" id="GO:0004801">
    <property type="term" value="F:transaldolase activity"/>
    <property type="evidence" value="ECO:0007669"/>
    <property type="project" value="UniProtKB-UniRule"/>
</dbReference>
<dbReference type="GO" id="GO:0005975">
    <property type="term" value="P:carbohydrate metabolic process"/>
    <property type="evidence" value="ECO:0007669"/>
    <property type="project" value="InterPro"/>
</dbReference>
<dbReference type="GO" id="GO:0006098">
    <property type="term" value="P:pentose-phosphate shunt"/>
    <property type="evidence" value="ECO:0007669"/>
    <property type="project" value="UniProtKB-UniRule"/>
</dbReference>
<dbReference type="CDD" id="cd00956">
    <property type="entry name" value="Transaldolase_FSA"/>
    <property type="match status" value="1"/>
</dbReference>
<dbReference type="FunFam" id="3.20.20.70:FF:000018">
    <property type="entry name" value="Probable transaldolase"/>
    <property type="match status" value="1"/>
</dbReference>
<dbReference type="Gene3D" id="3.20.20.70">
    <property type="entry name" value="Aldolase class I"/>
    <property type="match status" value="1"/>
</dbReference>
<dbReference type="HAMAP" id="MF_00494">
    <property type="entry name" value="Transaldolase_3b"/>
    <property type="match status" value="1"/>
</dbReference>
<dbReference type="InterPro" id="IPR013785">
    <property type="entry name" value="Aldolase_TIM"/>
</dbReference>
<dbReference type="InterPro" id="IPR001585">
    <property type="entry name" value="TAL/FSA"/>
</dbReference>
<dbReference type="InterPro" id="IPR022999">
    <property type="entry name" value="Transaldolase_3B"/>
</dbReference>
<dbReference type="InterPro" id="IPR004731">
    <property type="entry name" value="Transaldolase_3B/F6P_aldolase"/>
</dbReference>
<dbReference type="InterPro" id="IPR018225">
    <property type="entry name" value="Transaldolase_AS"/>
</dbReference>
<dbReference type="InterPro" id="IPR033919">
    <property type="entry name" value="TSA/FSA_arc/bac"/>
</dbReference>
<dbReference type="NCBIfam" id="TIGR00875">
    <property type="entry name" value="fsa_talC_mipB"/>
    <property type="match status" value="1"/>
</dbReference>
<dbReference type="PANTHER" id="PTHR10683:SF40">
    <property type="entry name" value="FRUCTOSE-6-PHOSPHATE ALDOLASE 1-RELATED"/>
    <property type="match status" value="1"/>
</dbReference>
<dbReference type="PANTHER" id="PTHR10683">
    <property type="entry name" value="TRANSALDOLASE"/>
    <property type="match status" value="1"/>
</dbReference>
<dbReference type="Pfam" id="PF00923">
    <property type="entry name" value="TAL_FSA"/>
    <property type="match status" value="1"/>
</dbReference>
<dbReference type="SUPFAM" id="SSF51569">
    <property type="entry name" value="Aldolase"/>
    <property type="match status" value="1"/>
</dbReference>
<dbReference type="PROSITE" id="PS01054">
    <property type="entry name" value="TRANSALDOLASE_1"/>
    <property type="match status" value="1"/>
</dbReference>
<feature type="chain" id="PRO_1000126286" description="Probable transaldolase">
    <location>
        <begin position="1"/>
        <end position="222"/>
    </location>
</feature>
<feature type="active site" description="Schiff-base intermediate with substrate" evidence="1">
    <location>
        <position position="91"/>
    </location>
</feature>
<comment type="function">
    <text evidence="1">Transaldolase is important for the balance of metabolites in the pentose-phosphate pathway.</text>
</comment>
<comment type="catalytic activity">
    <reaction evidence="1">
        <text>D-sedoheptulose 7-phosphate + D-glyceraldehyde 3-phosphate = D-erythrose 4-phosphate + beta-D-fructose 6-phosphate</text>
        <dbReference type="Rhea" id="RHEA:17053"/>
        <dbReference type="ChEBI" id="CHEBI:16897"/>
        <dbReference type="ChEBI" id="CHEBI:57483"/>
        <dbReference type="ChEBI" id="CHEBI:57634"/>
        <dbReference type="ChEBI" id="CHEBI:59776"/>
        <dbReference type="EC" id="2.2.1.2"/>
    </reaction>
</comment>
<comment type="pathway">
    <text evidence="1">Carbohydrate degradation; pentose phosphate pathway; D-glyceraldehyde 3-phosphate and beta-D-fructose 6-phosphate from D-ribose 5-phosphate and D-xylulose 5-phosphate (non-oxidative stage): step 2/3.</text>
</comment>
<comment type="subcellular location">
    <subcellularLocation>
        <location evidence="1">Cytoplasm</location>
    </subcellularLocation>
</comment>
<comment type="similarity">
    <text evidence="1">Belongs to the transaldolase family. Type 3B subfamily.</text>
</comment>
<organism>
    <name type="scientific">Chlorobium chlorochromatii (strain CaD3)</name>
    <dbReference type="NCBI Taxonomy" id="340177"/>
    <lineage>
        <taxon>Bacteria</taxon>
        <taxon>Pseudomonadati</taxon>
        <taxon>Chlorobiota</taxon>
        <taxon>Chlorobiia</taxon>
        <taxon>Chlorobiales</taxon>
        <taxon>Chlorobiaceae</taxon>
        <taxon>Chlorobium/Pelodictyon group</taxon>
        <taxon>Chlorobium</taxon>
    </lineage>
</organism>